<sequence>MTRKLVLLRHGQSQWNSMNRFTGWVDIGLTEQGHQEATMAGHLMKKEGLEFDVAHTSLLKRAIHTLQDALKALDQDWLPIYKSWRLNERHYGALQGLDKIDTAAKHGEEQVNIWRRSYDIQPPPIDLDDPSHPMRDRRYAALDRKVLPVRESLKNTLERVLPYWNDAIAPQLNDNKTVLISAHGNSLRALYKYLNKESDEKILNVNIPTGIPLLFELSDTLQVVSYRYLGDPDAAQRAAEMVANQGKAK</sequence>
<evidence type="ECO:0000255" key="1">
    <source>
        <dbReference type="HAMAP-Rule" id="MF_01039"/>
    </source>
</evidence>
<name>GPMA_XYLF2</name>
<keyword id="KW-0312">Gluconeogenesis</keyword>
<keyword id="KW-0324">Glycolysis</keyword>
<keyword id="KW-0413">Isomerase</keyword>
<comment type="function">
    <text evidence="1">Catalyzes the interconversion of 2-phosphoglycerate and 3-phosphoglycerate.</text>
</comment>
<comment type="catalytic activity">
    <reaction evidence="1">
        <text>(2R)-2-phosphoglycerate = (2R)-3-phosphoglycerate</text>
        <dbReference type="Rhea" id="RHEA:15901"/>
        <dbReference type="ChEBI" id="CHEBI:58272"/>
        <dbReference type="ChEBI" id="CHEBI:58289"/>
        <dbReference type="EC" id="5.4.2.11"/>
    </reaction>
</comment>
<comment type="pathway">
    <text evidence="1">Carbohydrate degradation; glycolysis; pyruvate from D-glyceraldehyde 3-phosphate: step 3/5.</text>
</comment>
<comment type="subunit">
    <text evidence="1">Homodimer.</text>
</comment>
<comment type="similarity">
    <text evidence="1">Belongs to the phosphoglycerate mutase family. BPG-dependent PGAM subfamily.</text>
</comment>
<dbReference type="EC" id="5.4.2.11" evidence="1"/>
<dbReference type="EMBL" id="CP001011">
    <property type="protein sequence ID" value="ACB92385.1"/>
    <property type="molecule type" value="Genomic_DNA"/>
</dbReference>
<dbReference type="RefSeq" id="WP_004572908.1">
    <property type="nucleotide sequence ID" value="NC_010577.1"/>
</dbReference>
<dbReference type="SMR" id="B2I4U0"/>
<dbReference type="GeneID" id="93904689"/>
<dbReference type="KEGG" id="xfn:XfasM23_0953"/>
<dbReference type="HOGENOM" id="CLU_033323_1_1_6"/>
<dbReference type="UniPathway" id="UPA00109">
    <property type="reaction ID" value="UER00186"/>
</dbReference>
<dbReference type="Proteomes" id="UP000001698">
    <property type="component" value="Chromosome"/>
</dbReference>
<dbReference type="GO" id="GO:0004619">
    <property type="term" value="F:phosphoglycerate mutase activity"/>
    <property type="evidence" value="ECO:0007669"/>
    <property type="project" value="UniProtKB-EC"/>
</dbReference>
<dbReference type="GO" id="GO:0006094">
    <property type="term" value="P:gluconeogenesis"/>
    <property type="evidence" value="ECO:0007669"/>
    <property type="project" value="UniProtKB-UniRule"/>
</dbReference>
<dbReference type="GO" id="GO:0006096">
    <property type="term" value="P:glycolytic process"/>
    <property type="evidence" value="ECO:0007669"/>
    <property type="project" value="UniProtKB-UniRule"/>
</dbReference>
<dbReference type="CDD" id="cd07067">
    <property type="entry name" value="HP_PGM_like"/>
    <property type="match status" value="1"/>
</dbReference>
<dbReference type="FunFam" id="3.40.50.1240:FF:000003">
    <property type="entry name" value="2,3-bisphosphoglycerate-dependent phosphoglycerate mutase"/>
    <property type="match status" value="1"/>
</dbReference>
<dbReference type="Gene3D" id="3.40.50.1240">
    <property type="entry name" value="Phosphoglycerate mutase-like"/>
    <property type="match status" value="1"/>
</dbReference>
<dbReference type="HAMAP" id="MF_01039">
    <property type="entry name" value="PGAM_GpmA"/>
    <property type="match status" value="1"/>
</dbReference>
<dbReference type="InterPro" id="IPR013078">
    <property type="entry name" value="His_Pase_superF_clade-1"/>
</dbReference>
<dbReference type="InterPro" id="IPR029033">
    <property type="entry name" value="His_PPase_superfam"/>
</dbReference>
<dbReference type="InterPro" id="IPR001345">
    <property type="entry name" value="PG/BPGM_mutase_AS"/>
</dbReference>
<dbReference type="InterPro" id="IPR005952">
    <property type="entry name" value="Phosphogly_mut1"/>
</dbReference>
<dbReference type="NCBIfam" id="TIGR01258">
    <property type="entry name" value="pgm_1"/>
    <property type="match status" value="1"/>
</dbReference>
<dbReference type="NCBIfam" id="NF010713">
    <property type="entry name" value="PRK14115.1"/>
    <property type="match status" value="1"/>
</dbReference>
<dbReference type="PANTHER" id="PTHR11931">
    <property type="entry name" value="PHOSPHOGLYCERATE MUTASE"/>
    <property type="match status" value="1"/>
</dbReference>
<dbReference type="Pfam" id="PF00300">
    <property type="entry name" value="His_Phos_1"/>
    <property type="match status" value="1"/>
</dbReference>
<dbReference type="PIRSF" id="PIRSF000709">
    <property type="entry name" value="6PFK_2-Ptase"/>
    <property type="match status" value="1"/>
</dbReference>
<dbReference type="SMART" id="SM00855">
    <property type="entry name" value="PGAM"/>
    <property type="match status" value="1"/>
</dbReference>
<dbReference type="SUPFAM" id="SSF53254">
    <property type="entry name" value="Phosphoglycerate mutase-like"/>
    <property type="match status" value="1"/>
</dbReference>
<dbReference type="PROSITE" id="PS00175">
    <property type="entry name" value="PG_MUTASE"/>
    <property type="match status" value="1"/>
</dbReference>
<gene>
    <name evidence="1" type="primary">gpmA</name>
    <name type="ordered locus">XfasM23_0953</name>
</gene>
<feature type="chain" id="PRO_1000135994" description="2,3-bisphosphoglycerate-dependent phosphoglycerate mutase">
    <location>
        <begin position="1"/>
        <end position="249"/>
    </location>
</feature>
<feature type="active site" description="Tele-phosphohistidine intermediate" evidence="1">
    <location>
        <position position="10"/>
    </location>
</feature>
<feature type="active site" description="Proton donor/acceptor" evidence="1">
    <location>
        <position position="88"/>
    </location>
</feature>
<feature type="binding site" evidence="1">
    <location>
        <begin position="9"/>
        <end position="16"/>
    </location>
    <ligand>
        <name>substrate</name>
    </ligand>
</feature>
<feature type="binding site" evidence="1">
    <location>
        <begin position="22"/>
        <end position="23"/>
    </location>
    <ligand>
        <name>substrate</name>
    </ligand>
</feature>
<feature type="binding site" evidence="1">
    <location>
        <position position="61"/>
    </location>
    <ligand>
        <name>substrate</name>
    </ligand>
</feature>
<feature type="binding site" evidence="1">
    <location>
        <begin position="88"/>
        <end position="91"/>
    </location>
    <ligand>
        <name>substrate</name>
    </ligand>
</feature>
<feature type="binding site" evidence="1">
    <location>
        <position position="99"/>
    </location>
    <ligand>
        <name>substrate</name>
    </ligand>
</feature>
<feature type="binding site" evidence="1">
    <location>
        <begin position="115"/>
        <end position="116"/>
    </location>
    <ligand>
        <name>substrate</name>
    </ligand>
</feature>
<feature type="binding site" evidence="1">
    <location>
        <begin position="184"/>
        <end position="185"/>
    </location>
    <ligand>
        <name>substrate</name>
    </ligand>
</feature>
<feature type="site" description="Transition state stabilizer" evidence="1">
    <location>
        <position position="183"/>
    </location>
</feature>
<organism>
    <name type="scientific">Xylella fastidiosa (strain M23)</name>
    <dbReference type="NCBI Taxonomy" id="405441"/>
    <lineage>
        <taxon>Bacteria</taxon>
        <taxon>Pseudomonadati</taxon>
        <taxon>Pseudomonadota</taxon>
        <taxon>Gammaproteobacteria</taxon>
        <taxon>Lysobacterales</taxon>
        <taxon>Lysobacteraceae</taxon>
        <taxon>Xylella</taxon>
    </lineage>
</organism>
<accession>B2I4U0</accession>
<proteinExistence type="inferred from homology"/>
<protein>
    <recommendedName>
        <fullName evidence="1">2,3-bisphosphoglycerate-dependent phosphoglycerate mutase</fullName>
        <shortName evidence="1">BPG-dependent PGAM</shortName>
        <shortName evidence="1">PGAM</shortName>
        <shortName evidence="1">Phosphoglyceromutase</shortName>
        <shortName evidence="1">dPGM</shortName>
        <ecNumber evidence="1">5.4.2.11</ecNumber>
    </recommendedName>
</protein>
<reference key="1">
    <citation type="journal article" date="2010" name="J. Bacteriol.">
        <title>Whole genome sequences of two Xylella fastidiosa strains (M12 and M23) causing almond leaf scorch disease in California.</title>
        <authorList>
            <person name="Chen J."/>
            <person name="Xie G."/>
            <person name="Han S."/>
            <person name="Chertkov O."/>
            <person name="Sims D."/>
            <person name="Civerolo E.L."/>
        </authorList>
    </citation>
    <scope>NUCLEOTIDE SEQUENCE [LARGE SCALE GENOMIC DNA]</scope>
    <source>
        <strain>M23</strain>
    </source>
</reference>